<accession>Q8BZL8</accession>
<organism>
    <name type="scientific">Mus musculus</name>
    <name type="common">Mouse</name>
    <dbReference type="NCBI Taxonomy" id="10090"/>
    <lineage>
        <taxon>Eukaryota</taxon>
        <taxon>Metazoa</taxon>
        <taxon>Chordata</taxon>
        <taxon>Craniata</taxon>
        <taxon>Vertebrata</taxon>
        <taxon>Euteleostomi</taxon>
        <taxon>Mammalia</taxon>
        <taxon>Eutheria</taxon>
        <taxon>Euarchontoglires</taxon>
        <taxon>Glires</taxon>
        <taxon>Rodentia</taxon>
        <taxon>Myomorpha</taxon>
        <taxon>Muroidea</taxon>
        <taxon>Muridae</taxon>
        <taxon>Murinae</taxon>
        <taxon>Mus</taxon>
        <taxon>Mus</taxon>
    </lineage>
</organism>
<evidence type="ECO:0000255" key="1">
    <source>
        <dbReference type="PROSITE-ProRule" id="PRU00125"/>
    </source>
</evidence>
<protein>
    <recommendedName>
        <fullName>LIM domain only protein 3</fullName>
        <shortName>LMO-3</shortName>
    </recommendedName>
    <alternativeName>
        <fullName>Neuronal-specific transcription factor DAT1</fullName>
    </alternativeName>
</protein>
<proteinExistence type="evidence at transcript level"/>
<feature type="chain" id="PRO_0000075818" description="LIM domain only protein 3">
    <location>
        <begin position="1"/>
        <end position="145"/>
    </location>
</feature>
<feature type="domain" description="LIM zinc-binding 1" evidence="1">
    <location>
        <begin position="11"/>
        <end position="73"/>
    </location>
</feature>
<feature type="domain" description="LIM zinc-binding 2" evidence="1">
    <location>
        <begin position="75"/>
        <end position="137"/>
    </location>
</feature>
<keyword id="KW-0440">LIM domain</keyword>
<keyword id="KW-0479">Metal-binding</keyword>
<keyword id="KW-1185">Reference proteome</keyword>
<keyword id="KW-0677">Repeat</keyword>
<keyword id="KW-0804">Transcription</keyword>
<keyword id="KW-0805">Transcription regulation</keyword>
<keyword id="KW-0862">Zinc</keyword>
<gene>
    <name type="primary">Lmo3</name>
</gene>
<dbReference type="EMBL" id="AK034177">
    <property type="protein sequence ID" value="BAC28617.1"/>
    <property type="molecule type" value="mRNA"/>
</dbReference>
<dbReference type="EMBL" id="BC057086">
    <property type="protein sequence ID" value="AAH57086.1"/>
    <property type="molecule type" value="mRNA"/>
</dbReference>
<dbReference type="CCDS" id="CCDS20669.1"/>
<dbReference type="RefSeq" id="NP_001343234.1">
    <property type="nucleotide sequence ID" value="NM_001356305.2"/>
</dbReference>
<dbReference type="RefSeq" id="NP_001343235.1">
    <property type="nucleotide sequence ID" value="NM_001356306.2"/>
</dbReference>
<dbReference type="RefSeq" id="NP_001398426.1">
    <property type="nucleotide sequence ID" value="NM_001411497.1"/>
</dbReference>
<dbReference type="RefSeq" id="NP_001398427.1">
    <property type="nucleotide sequence ID" value="NM_001411498.1"/>
</dbReference>
<dbReference type="RefSeq" id="NP_001398428.1">
    <property type="nucleotide sequence ID" value="NM_001411499.1"/>
</dbReference>
<dbReference type="RefSeq" id="NP_001398429.1">
    <property type="nucleotide sequence ID" value="NM_001411500.1"/>
</dbReference>
<dbReference type="RefSeq" id="NP_001398430.1">
    <property type="nucleotide sequence ID" value="NM_001411501.1"/>
</dbReference>
<dbReference type="RefSeq" id="NP_001398431.1">
    <property type="nucleotide sequence ID" value="NM_001411502.1"/>
</dbReference>
<dbReference type="RefSeq" id="NP_001398432.1">
    <property type="nucleotide sequence ID" value="NM_001411503.1"/>
</dbReference>
<dbReference type="RefSeq" id="NP_001398433.1">
    <property type="nucleotide sequence ID" value="NM_001411504.1"/>
</dbReference>
<dbReference type="RefSeq" id="NP_997105.1">
    <property type="nucleotide sequence ID" value="NM_207222.4"/>
</dbReference>
<dbReference type="RefSeq" id="XP_006505403.1">
    <property type="nucleotide sequence ID" value="XM_006505340.1"/>
</dbReference>
<dbReference type="RefSeq" id="XP_006505404.1">
    <property type="nucleotide sequence ID" value="XM_006505341.3"/>
</dbReference>
<dbReference type="RefSeq" id="XP_006505405.1">
    <property type="nucleotide sequence ID" value="XM_006505342.2"/>
</dbReference>
<dbReference type="RefSeq" id="XP_006505407.1">
    <property type="nucleotide sequence ID" value="XM_006505344.3"/>
</dbReference>
<dbReference type="RefSeq" id="XP_011239433.1">
    <property type="nucleotide sequence ID" value="XM_011241131.2"/>
</dbReference>
<dbReference type="RefSeq" id="XP_011239434.1">
    <property type="nucleotide sequence ID" value="XM_011241132.2"/>
</dbReference>
<dbReference type="RefSeq" id="XP_011239435.1">
    <property type="nucleotide sequence ID" value="XM_011241133.2"/>
</dbReference>
<dbReference type="RefSeq" id="XP_017176802.1">
    <property type="nucleotide sequence ID" value="XM_017321313.1"/>
</dbReference>
<dbReference type="RefSeq" id="XP_030110947.1">
    <property type="nucleotide sequence ID" value="XM_030255087.1"/>
</dbReference>
<dbReference type="SMR" id="Q8BZL8"/>
<dbReference type="BioGRID" id="224886">
    <property type="interactions" value="6"/>
</dbReference>
<dbReference type="FunCoup" id="Q8BZL8">
    <property type="interactions" value="2022"/>
</dbReference>
<dbReference type="IntAct" id="Q8BZL8">
    <property type="interactions" value="6"/>
</dbReference>
<dbReference type="STRING" id="10090.ENSMUSP00000125335"/>
<dbReference type="PhosphoSitePlus" id="Q8BZL8"/>
<dbReference type="PaxDb" id="10090-ENSMUSP00000125335"/>
<dbReference type="ProteomicsDB" id="290134"/>
<dbReference type="Antibodypedia" id="23835">
    <property type="antibodies" value="284 antibodies from 29 providers"/>
</dbReference>
<dbReference type="DNASU" id="109593"/>
<dbReference type="Ensembl" id="ENSMUST00000161450.8">
    <property type="protein sequence ID" value="ENSMUSP00000124862.2"/>
    <property type="gene ID" value="ENSMUSG00000030226.13"/>
</dbReference>
<dbReference type="Ensembl" id="ENSMUST00000162772.8">
    <property type="protein sequence ID" value="ENSMUSP00000125335.2"/>
    <property type="gene ID" value="ENSMUSG00000030226.13"/>
</dbReference>
<dbReference type="Ensembl" id="ENSMUST00000163024.8">
    <property type="protein sequence ID" value="ENSMUSP00000125589.2"/>
    <property type="gene ID" value="ENSMUSG00000030226.13"/>
</dbReference>
<dbReference type="Ensembl" id="ENSMUST00000203435.3">
    <property type="protein sequence ID" value="ENSMUSP00000145048.2"/>
    <property type="gene ID" value="ENSMUSG00000030226.13"/>
</dbReference>
<dbReference type="GeneID" id="109593"/>
<dbReference type="KEGG" id="mmu:109593"/>
<dbReference type="UCSC" id="uc009enl.1">
    <property type="organism name" value="mouse"/>
</dbReference>
<dbReference type="AGR" id="MGI:102810"/>
<dbReference type="CTD" id="55885"/>
<dbReference type="MGI" id="MGI:102810">
    <property type="gene designation" value="Lmo3"/>
</dbReference>
<dbReference type="VEuPathDB" id="HostDB:ENSMUSG00000030226"/>
<dbReference type="eggNOG" id="KOG0490">
    <property type="taxonomic scope" value="Eukaryota"/>
</dbReference>
<dbReference type="GeneTree" id="ENSGT00940000153908"/>
<dbReference type="HOGENOM" id="CLU_001357_7_1_1"/>
<dbReference type="InParanoid" id="Q8BZL8"/>
<dbReference type="PhylomeDB" id="Q8BZL8"/>
<dbReference type="TreeFam" id="TF351071"/>
<dbReference type="BioGRID-ORCS" id="109593">
    <property type="hits" value="2 hits in 78 CRISPR screens"/>
</dbReference>
<dbReference type="PRO" id="PR:Q8BZL8"/>
<dbReference type="Proteomes" id="UP000000589">
    <property type="component" value="Chromosome 6"/>
</dbReference>
<dbReference type="RNAct" id="Q8BZL8">
    <property type="molecule type" value="protein"/>
</dbReference>
<dbReference type="Bgee" id="ENSMUSG00000030226">
    <property type="expression patterns" value="Expressed in piriform cortex and 103 other cell types or tissues"/>
</dbReference>
<dbReference type="ExpressionAtlas" id="Q8BZL8">
    <property type="expression patterns" value="baseline and differential"/>
</dbReference>
<dbReference type="GO" id="GO:0046872">
    <property type="term" value="F:metal ion binding"/>
    <property type="evidence" value="ECO:0007669"/>
    <property type="project" value="UniProtKB-KW"/>
</dbReference>
<dbReference type="GO" id="GO:0035640">
    <property type="term" value="P:exploration behavior"/>
    <property type="evidence" value="ECO:0000315"/>
    <property type="project" value="MGI"/>
</dbReference>
<dbReference type="GO" id="GO:0045944">
    <property type="term" value="P:positive regulation of transcription by RNA polymerase II"/>
    <property type="evidence" value="ECO:0000315"/>
    <property type="project" value="MGI"/>
</dbReference>
<dbReference type="CDD" id="cd09388">
    <property type="entry name" value="LIM1_LMO1_LMO3"/>
    <property type="match status" value="1"/>
</dbReference>
<dbReference type="CDD" id="cd09389">
    <property type="entry name" value="LIM2_LMO1_LMO3"/>
    <property type="match status" value="1"/>
</dbReference>
<dbReference type="FunFam" id="2.10.110.10:FF:000015">
    <property type="entry name" value="LIM domain only 3"/>
    <property type="match status" value="1"/>
</dbReference>
<dbReference type="FunFam" id="2.10.110.10:FF:000016">
    <property type="entry name" value="LIM domain only 3"/>
    <property type="match status" value="1"/>
</dbReference>
<dbReference type="Gene3D" id="2.10.110.10">
    <property type="entry name" value="Cysteine Rich Protein"/>
    <property type="match status" value="2"/>
</dbReference>
<dbReference type="InterPro" id="IPR050945">
    <property type="entry name" value="LMO_RBTN_TF"/>
</dbReference>
<dbReference type="InterPro" id="IPR001781">
    <property type="entry name" value="Znf_LIM"/>
</dbReference>
<dbReference type="PANTHER" id="PTHR45787">
    <property type="entry name" value="LD11652P"/>
    <property type="match status" value="1"/>
</dbReference>
<dbReference type="PANTHER" id="PTHR45787:SF7">
    <property type="entry name" value="LIM DOMAIN ONLY PROTEIN 3"/>
    <property type="match status" value="1"/>
</dbReference>
<dbReference type="Pfam" id="PF00412">
    <property type="entry name" value="LIM"/>
    <property type="match status" value="2"/>
</dbReference>
<dbReference type="SMART" id="SM00132">
    <property type="entry name" value="LIM"/>
    <property type="match status" value="2"/>
</dbReference>
<dbReference type="SUPFAM" id="SSF57716">
    <property type="entry name" value="Glucocorticoid receptor-like (DNA-binding domain)"/>
    <property type="match status" value="3"/>
</dbReference>
<dbReference type="PROSITE" id="PS00478">
    <property type="entry name" value="LIM_DOMAIN_1"/>
    <property type="match status" value="2"/>
</dbReference>
<dbReference type="PROSITE" id="PS50023">
    <property type="entry name" value="LIM_DOMAIN_2"/>
    <property type="match status" value="2"/>
</dbReference>
<sequence length="145" mass="16594">MLSVQPDTKPKGCAGCNRKIKDRYLLKALDKYWHEDCLKCACCDCRLGEVGSTLYTKANLILCRRDYLRLFGVTGNCAACSKLIPAFEMVMRAKDNVYHLDCFACQLCNQRFCVGDKFFLKNNMILCQTDYEEGLMKEGYAPQVR</sequence>
<reference key="1">
    <citation type="journal article" date="2005" name="Science">
        <title>The transcriptional landscape of the mammalian genome.</title>
        <authorList>
            <person name="Carninci P."/>
            <person name="Kasukawa T."/>
            <person name="Katayama S."/>
            <person name="Gough J."/>
            <person name="Frith M.C."/>
            <person name="Maeda N."/>
            <person name="Oyama R."/>
            <person name="Ravasi T."/>
            <person name="Lenhard B."/>
            <person name="Wells C."/>
            <person name="Kodzius R."/>
            <person name="Shimokawa K."/>
            <person name="Bajic V.B."/>
            <person name="Brenner S.E."/>
            <person name="Batalov S."/>
            <person name="Forrest A.R."/>
            <person name="Zavolan M."/>
            <person name="Davis M.J."/>
            <person name="Wilming L.G."/>
            <person name="Aidinis V."/>
            <person name="Allen J.E."/>
            <person name="Ambesi-Impiombato A."/>
            <person name="Apweiler R."/>
            <person name="Aturaliya R.N."/>
            <person name="Bailey T.L."/>
            <person name="Bansal M."/>
            <person name="Baxter L."/>
            <person name="Beisel K.W."/>
            <person name="Bersano T."/>
            <person name="Bono H."/>
            <person name="Chalk A.M."/>
            <person name="Chiu K.P."/>
            <person name="Choudhary V."/>
            <person name="Christoffels A."/>
            <person name="Clutterbuck D.R."/>
            <person name="Crowe M.L."/>
            <person name="Dalla E."/>
            <person name="Dalrymple B.P."/>
            <person name="de Bono B."/>
            <person name="Della Gatta G."/>
            <person name="di Bernardo D."/>
            <person name="Down T."/>
            <person name="Engstrom P."/>
            <person name="Fagiolini M."/>
            <person name="Faulkner G."/>
            <person name="Fletcher C.F."/>
            <person name="Fukushima T."/>
            <person name="Furuno M."/>
            <person name="Futaki S."/>
            <person name="Gariboldi M."/>
            <person name="Georgii-Hemming P."/>
            <person name="Gingeras T.R."/>
            <person name="Gojobori T."/>
            <person name="Green R.E."/>
            <person name="Gustincich S."/>
            <person name="Harbers M."/>
            <person name="Hayashi Y."/>
            <person name="Hensch T.K."/>
            <person name="Hirokawa N."/>
            <person name="Hill D."/>
            <person name="Huminiecki L."/>
            <person name="Iacono M."/>
            <person name="Ikeo K."/>
            <person name="Iwama A."/>
            <person name="Ishikawa T."/>
            <person name="Jakt M."/>
            <person name="Kanapin A."/>
            <person name="Katoh M."/>
            <person name="Kawasawa Y."/>
            <person name="Kelso J."/>
            <person name="Kitamura H."/>
            <person name="Kitano H."/>
            <person name="Kollias G."/>
            <person name="Krishnan S.P."/>
            <person name="Kruger A."/>
            <person name="Kummerfeld S.K."/>
            <person name="Kurochkin I.V."/>
            <person name="Lareau L.F."/>
            <person name="Lazarevic D."/>
            <person name="Lipovich L."/>
            <person name="Liu J."/>
            <person name="Liuni S."/>
            <person name="McWilliam S."/>
            <person name="Madan Babu M."/>
            <person name="Madera M."/>
            <person name="Marchionni L."/>
            <person name="Matsuda H."/>
            <person name="Matsuzawa S."/>
            <person name="Miki H."/>
            <person name="Mignone F."/>
            <person name="Miyake S."/>
            <person name="Morris K."/>
            <person name="Mottagui-Tabar S."/>
            <person name="Mulder N."/>
            <person name="Nakano N."/>
            <person name="Nakauchi H."/>
            <person name="Ng P."/>
            <person name="Nilsson R."/>
            <person name="Nishiguchi S."/>
            <person name="Nishikawa S."/>
            <person name="Nori F."/>
            <person name="Ohara O."/>
            <person name="Okazaki Y."/>
            <person name="Orlando V."/>
            <person name="Pang K.C."/>
            <person name="Pavan W.J."/>
            <person name="Pavesi G."/>
            <person name="Pesole G."/>
            <person name="Petrovsky N."/>
            <person name="Piazza S."/>
            <person name="Reed J."/>
            <person name="Reid J.F."/>
            <person name="Ring B.Z."/>
            <person name="Ringwald M."/>
            <person name="Rost B."/>
            <person name="Ruan Y."/>
            <person name="Salzberg S.L."/>
            <person name="Sandelin A."/>
            <person name="Schneider C."/>
            <person name="Schoenbach C."/>
            <person name="Sekiguchi K."/>
            <person name="Semple C.A."/>
            <person name="Seno S."/>
            <person name="Sessa L."/>
            <person name="Sheng Y."/>
            <person name="Shibata Y."/>
            <person name="Shimada H."/>
            <person name="Shimada K."/>
            <person name="Silva D."/>
            <person name="Sinclair B."/>
            <person name="Sperling S."/>
            <person name="Stupka E."/>
            <person name="Sugiura K."/>
            <person name="Sultana R."/>
            <person name="Takenaka Y."/>
            <person name="Taki K."/>
            <person name="Tammoja K."/>
            <person name="Tan S.L."/>
            <person name="Tang S."/>
            <person name="Taylor M.S."/>
            <person name="Tegner J."/>
            <person name="Teichmann S.A."/>
            <person name="Ueda H.R."/>
            <person name="van Nimwegen E."/>
            <person name="Verardo R."/>
            <person name="Wei C.L."/>
            <person name="Yagi K."/>
            <person name="Yamanishi H."/>
            <person name="Zabarovsky E."/>
            <person name="Zhu S."/>
            <person name="Zimmer A."/>
            <person name="Hide W."/>
            <person name="Bult C."/>
            <person name="Grimmond S.M."/>
            <person name="Teasdale R.D."/>
            <person name="Liu E.T."/>
            <person name="Brusic V."/>
            <person name="Quackenbush J."/>
            <person name="Wahlestedt C."/>
            <person name="Mattick J.S."/>
            <person name="Hume D.A."/>
            <person name="Kai C."/>
            <person name="Sasaki D."/>
            <person name="Tomaru Y."/>
            <person name="Fukuda S."/>
            <person name="Kanamori-Katayama M."/>
            <person name="Suzuki M."/>
            <person name="Aoki J."/>
            <person name="Arakawa T."/>
            <person name="Iida J."/>
            <person name="Imamura K."/>
            <person name="Itoh M."/>
            <person name="Kato T."/>
            <person name="Kawaji H."/>
            <person name="Kawagashira N."/>
            <person name="Kawashima T."/>
            <person name="Kojima M."/>
            <person name="Kondo S."/>
            <person name="Konno H."/>
            <person name="Nakano K."/>
            <person name="Ninomiya N."/>
            <person name="Nishio T."/>
            <person name="Okada M."/>
            <person name="Plessy C."/>
            <person name="Shibata K."/>
            <person name="Shiraki T."/>
            <person name="Suzuki S."/>
            <person name="Tagami M."/>
            <person name="Waki K."/>
            <person name="Watahiki A."/>
            <person name="Okamura-Oho Y."/>
            <person name="Suzuki H."/>
            <person name="Kawai J."/>
            <person name="Hayashizaki Y."/>
        </authorList>
    </citation>
    <scope>NUCLEOTIDE SEQUENCE [LARGE SCALE MRNA]</scope>
    <source>
        <strain>C57BL/6J</strain>
        <tissue>Diencephalon</tissue>
    </source>
</reference>
<reference key="2">
    <citation type="journal article" date="2004" name="Genome Res.">
        <title>The status, quality, and expansion of the NIH full-length cDNA project: the Mammalian Gene Collection (MGC).</title>
        <authorList>
            <consortium name="The MGC Project Team"/>
        </authorList>
    </citation>
    <scope>NUCLEOTIDE SEQUENCE [LARGE SCALE MRNA]</scope>
    <source>
        <strain>C57BL/6J</strain>
        <tissue>Brain</tissue>
    </source>
</reference>
<name>LMO3_MOUSE</name>